<dbReference type="EC" id="2.1.1.33" evidence="2"/>
<dbReference type="EMBL" id="BA000039">
    <property type="protein sequence ID" value="BAC09535.1"/>
    <property type="molecule type" value="Genomic_DNA"/>
</dbReference>
<dbReference type="RefSeq" id="NP_682773.1">
    <property type="nucleotide sequence ID" value="NC_004113.1"/>
</dbReference>
<dbReference type="RefSeq" id="WP_011057818.1">
    <property type="nucleotide sequence ID" value="NC_004113.1"/>
</dbReference>
<dbReference type="SMR" id="Q8DHH6"/>
<dbReference type="STRING" id="197221.gene:10748591"/>
<dbReference type="EnsemblBacteria" id="BAC09535">
    <property type="protein sequence ID" value="BAC09535"/>
    <property type="gene ID" value="BAC09535"/>
</dbReference>
<dbReference type="KEGG" id="tel:tll1983"/>
<dbReference type="PATRIC" id="fig|197221.4.peg.2073"/>
<dbReference type="eggNOG" id="COG0220">
    <property type="taxonomic scope" value="Bacteria"/>
</dbReference>
<dbReference type="UniPathway" id="UPA00989"/>
<dbReference type="Proteomes" id="UP000000440">
    <property type="component" value="Chromosome"/>
</dbReference>
<dbReference type="GO" id="GO:0043527">
    <property type="term" value="C:tRNA methyltransferase complex"/>
    <property type="evidence" value="ECO:0007669"/>
    <property type="project" value="TreeGrafter"/>
</dbReference>
<dbReference type="GO" id="GO:0008176">
    <property type="term" value="F:tRNA (guanine(46)-N7)-methyltransferase activity"/>
    <property type="evidence" value="ECO:0007669"/>
    <property type="project" value="UniProtKB-UniRule"/>
</dbReference>
<dbReference type="CDD" id="cd02440">
    <property type="entry name" value="AdoMet_MTases"/>
    <property type="match status" value="1"/>
</dbReference>
<dbReference type="Gene3D" id="3.40.50.150">
    <property type="entry name" value="Vaccinia Virus protein VP39"/>
    <property type="match status" value="1"/>
</dbReference>
<dbReference type="HAMAP" id="MF_01057">
    <property type="entry name" value="tRNA_methyltr_TrmB"/>
    <property type="match status" value="1"/>
</dbReference>
<dbReference type="InterPro" id="IPR029063">
    <property type="entry name" value="SAM-dependent_MTases_sf"/>
</dbReference>
<dbReference type="InterPro" id="IPR003358">
    <property type="entry name" value="tRNA_(Gua-N-7)_MeTrfase_Trmb"/>
</dbReference>
<dbReference type="InterPro" id="IPR055361">
    <property type="entry name" value="tRNA_methyltr_TrmB_bact"/>
</dbReference>
<dbReference type="NCBIfam" id="TIGR00091">
    <property type="entry name" value="tRNA (guanosine(46)-N7)-methyltransferase TrmB"/>
    <property type="match status" value="1"/>
</dbReference>
<dbReference type="PANTHER" id="PTHR23417">
    <property type="entry name" value="3-DEOXY-D-MANNO-OCTULOSONIC-ACID TRANSFERASE/TRNA GUANINE-N 7 - -METHYLTRANSFERASE"/>
    <property type="match status" value="1"/>
</dbReference>
<dbReference type="PANTHER" id="PTHR23417:SF21">
    <property type="entry name" value="TRNA (GUANINE-N(7)-)-METHYLTRANSFERASE"/>
    <property type="match status" value="1"/>
</dbReference>
<dbReference type="Pfam" id="PF02390">
    <property type="entry name" value="Methyltransf_4"/>
    <property type="match status" value="1"/>
</dbReference>
<dbReference type="SUPFAM" id="SSF53335">
    <property type="entry name" value="S-adenosyl-L-methionine-dependent methyltransferases"/>
    <property type="match status" value="1"/>
</dbReference>
<dbReference type="PROSITE" id="PS51625">
    <property type="entry name" value="SAM_MT_TRMB"/>
    <property type="match status" value="1"/>
</dbReference>
<evidence type="ECO:0000250" key="1"/>
<evidence type="ECO:0000255" key="2">
    <source>
        <dbReference type="HAMAP-Rule" id="MF_01057"/>
    </source>
</evidence>
<accession>Q8DHH6</accession>
<proteinExistence type="inferred from homology"/>
<name>TRMB_THEVB</name>
<protein>
    <recommendedName>
        <fullName evidence="2">tRNA (guanine-N(7)-)-methyltransferase</fullName>
        <ecNumber evidence="2">2.1.1.33</ecNumber>
    </recommendedName>
    <alternativeName>
        <fullName evidence="2">tRNA (guanine(46)-N(7))-methyltransferase</fullName>
    </alternativeName>
    <alternativeName>
        <fullName evidence="2">tRNA(m7G46)-methyltransferase</fullName>
    </alternativeName>
</protein>
<sequence>MSDRAMVVRVRQHVNPLSQKFQQDIPVPDWSRIYEQPSQPLHLDIGCARGTFLLEMAALYPEQNFLGLEIRYPLVVAANERRDRQQLRNLHYLWGNANVHLSKILGGLPLHTVTIQFPDPWFKRRHHKRRVVTPELVATLAELLPAGGRVVLQSDVFEVAESMVQQFRAHGAFRSTCTDWLPQSPWPVATEREKCVLNKGLAVYRWQFERCAV</sequence>
<organism>
    <name type="scientific">Thermosynechococcus vestitus (strain NIES-2133 / IAM M-273 / BP-1)</name>
    <dbReference type="NCBI Taxonomy" id="197221"/>
    <lineage>
        <taxon>Bacteria</taxon>
        <taxon>Bacillati</taxon>
        <taxon>Cyanobacteriota</taxon>
        <taxon>Cyanophyceae</taxon>
        <taxon>Acaryochloridales</taxon>
        <taxon>Thermosynechococcaceae</taxon>
        <taxon>Thermosynechococcus</taxon>
    </lineage>
</organism>
<keyword id="KW-0489">Methyltransferase</keyword>
<keyword id="KW-1185">Reference proteome</keyword>
<keyword id="KW-0949">S-adenosyl-L-methionine</keyword>
<keyword id="KW-0808">Transferase</keyword>
<keyword id="KW-0819">tRNA processing</keyword>
<comment type="function">
    <text evidence="2">Catalyzes the formation of N(7)-methylguanine at position 46 (m7G46) in tRNA.</text>
</comment>
<comment type="catalytic activity">
    <reaction evidence="2">
        <text>guanosine(46) in tRNA + S-adenosyl-L-methionine = N(7)-methylguanosine(46) in tRNA + S-adenosyl-L-homocysteine</text>
        <dbReference type="Rhea" id="RHEA:42708"/>
        <dbReference type="Rhea" id="RHEA-COMP:10188"/>
        <dbReference type="Rhea" id="RHEA-COMP:10189"/>
        <dbReference type="ChEBI" id="CHEBI:57856"/>
        <dbReference type="ChEBI" id="CHEBI:59789"/>
        <dbReference type="ChEBI" id="CHEBI:74269"/>
        <dbReference type="ChEBI" id="CHEBI:74480"/>
        <dbReference type="EC" id="2.1.1.33"/>
    </reaction>
</comment>
<comment type="pathway">
    <text evidence="2">tRNA modification; N(7)-methylguanine-tRNA biosynthesis.</text>
</comment>
<comment type="similarity">
    <text evidence="2">Belongs to the class I-like SAM-binding methyltransferase superfamily. TrmB family.</text>
</comment>
<reference key="1">
    <citation type="journal article" date="2002" name="DNA Res.">
        <title>Complete genome structure of the thermophilic cyanobacterium Thermosynechococcus elongatus BP-1.</title>
        <authorList>
            <person name="Nakamura Y."/>
            <person name="Kaneko T."/>
            <person name="Sato S."/>
            <person name="Ikeuchi M."/>
            <person name="Katoh H."/>
            <person name="Sasamoto S."/>
            <person name="Watanabe A."/>
            <person name="Iriguchi M."/>
            <person name="Kawashima K."/>
            <person name="Kimura T."/>
            <person name="Kishida Y."/>
            <person name="Kiyokawa C."/>
            <person name="Kohara M."/>
            <person name="Matsumoto M."/>
            <person name="Matsuno A."/>
            <person name="Nakazaki N."/>
            <person name="Shimpo S."/>
            <person name="Sugimoto M."/>
            <person name="Takeuchi C."/>
            <person name="Yamada M."/>
            <person name="Tabata S."/>
        </authorList>
    </citation>
    <scope>NUCLEOTIDE SEQUENCE [LARGE SCALE GENOMIC DNA]</scope>
    <source>
        <strain>NIES-2133 / IAM M-273 / BP-1</strain>
    </source>
</reference>
<feature type="chain" id="PRO_0000171409" description="tRNA (guanine-N(7)-)-methyltransferase">
    <location>
        <begin position="1"/>
        <end position="213"/>
    </location>
</feature>
<feature type="active site" evidence="1">
    <location>
        <position position="119"/>
    </location>
</feature>
<feature type="binding site" evidence="2">
    <location>
        <position position="44"/>
    </location>
    <ligand>
        <name>S-adenosyl-L-methionine</name>
        <dbReference type="ChEBI" id="CHEBI:59789"/>
    </ligand>
</feature>
<feature type="binding site" evidence="2">
    <location>
        <position position="69"/>
    </location>
    <ligand>
        <name>S-adenosyl-L-methionine</name>
        <dbReference type="ChEBI" id="CHEBI:59789"/>
    </ligand>
</feature>
<feature type="binding site" evidence="2">
    <location>
        <position position="96"/>
    </location>
    <ligand>
        <name>S-adenosyl-L-methionine</name>
        <dbReference type="ChEBI" id="CHEBI:59789"/>
    </ligand>
</feature>
<feature type="binding site" evidence="2">
    <location>
        <position position="119"/>
    </location>
    <ligand>
        <name>S-adenosyl-L-methionine</name>
        <dbReference type="ChEBI" id="CHEBI:59789"/>
    </ligand>
</feature>
<feature type="binding site" evidence="2">
    <location>
        <position position="123"/>
    </location>
    <ligand>
        <name>substrate</name>
    </ligand>
</feature>
<feature type="binding site" evidence="2">
    <location>
        <position position="155"/>
    </location>
    <ligand>
        <name>substrate</name>
    </ligand>
</feature>
<gene>
    <name evidence="2" type="primary">trmB</name>
    <name type="ordered locus">tll1983</name>
</gene>